<organism>
    <name type="scientific">Mus musculus</name>
    <name type="common">Mouse</name>
    <dbReference type="NCBI Taxonomy" id="10090"/>
    <lineage>
        <taxon>Eukaryota</taxon>
        <taxon>Metazoa</taxon>
        <taxon>Chordata</taxon>
        <taxon>Craniata</taxon>
        <taxon>Vertebrata</taxon>
        <taxon>Euteleostomi</taxon>
        <taxon>Mammalia</taxon>
        <taxon>Eutheria</taxon>
        <taxon>Euarchontoglires</taxon>
        <taxon>Glires</taxon>
        <taxon>Rodentia</taxon>
        <taxon>Myomorpha</taxon>
        <taxon>Muroidea</taxon>
        <taxon>Muridae</taxon>
        <taxon>Murinae</taxon>
        <taxon>Mus</taxon>
        <taxon>Mus</taxon>
    </lineage>
</organism>
<name>RNK_MOUSE</name>
<dbReference type="EC" id="3.1.-.-" evidence="2"/>
<dbReference type="EMBL" id="AK009592">
    <property type="protein sequence ID" value="BAC25261.1"/>
    <property type="molecule type" value="mRNA"/>
</dbReference>
<dbReference type="EMBL" id="AK171975">
    <property type="protein sequence ID" value="BAE42755.1"/>
    <property type="molecule type" value="mRNA"/>
</dbReference>
<dbReference type="EMBL" id="AL669869">
    <property type="status" value="NOT_ANNOTATED_CDS"/>
    <property type="molecule type" value="Genomic_DNA"/>
</dbReference>
<dbReference type="EMBL" id="CR933731">
    <property type="status" value="NOT_ANNOTATED_CDS"/>
    <property type="molecule type" value="Genomic_DNA"/>
</dbReference>
<dbReference type="EMBL" id="CH466596">
    <property type="protein sequence ID" value="EDL12546.1"/>
    <property type="molecule type" value="Genomic_DNA"/>
</dbReference>
<dbReference type="EMBL" id="BC021602">
    <property type="protein sequence ID" value="AAH21602.2"/>
    <property type="molecule type" value="mRNA"/>
</dbReference>
<dbReference type="EMBL" id="BC021603">
    <property type="protein sequence ID" value="AAH21603.2"/>
    <property type="molecule type" value="mRNA"/>
</dbReference>
<dbReference type="EMBL" id="BC024417">
    <property type="protein sequence ID" value="AAH24417.1"/>
    <property type="molecule type" value="mRNA"/>
</dbReference>
<dbReference type="CCDS" id="CCDS36204.1"/>
<dbReference type="RefSeq" id="NP_776103.1">
    <property type="nucleotide sequence ID" value="NM_173742.3"/>
</dbReference>
<dbReference type="PDB" id="9BRA">
    <property type="method" value="EM"/>
    <property type="resolution" value="4.30 A"/>
    <property type="chains" value="f=1-98"/>
</dbReference>
<dbReference type="PDB" id="9BRQ">
    <property type="method" value="EM"/>
    <property type="resolution" value="4.30 A"/>
    <property type="chains" value="f=1-98"/>
</dbReference>
<dbReference type="PDB" id="9BRR">
    <property type="method" value="EM"/>
    <property type="resolution" value="4.50 A"/>
    <property type="chains" value="f=1-98"/>
</dbReference>
<dbReference type="PDB" id="9BRS">
    <property type="method" value="EM"/>
    <property type="resolution" value="4.40 A"/>
    <property type="chains" value="f=1-98"/>
</dbReference>
<dbReference type="PDB" id="9BRT">
    <property type="method" value="EM"/>
    <property type="resolution" value="4.30 A"/>
    <property type="chains" value="f=1-98"/>
</dbReference>
<dbReference type="PDB" id="9BRU">
    <property type="method" value="EM"/>
    <property type="resolution" value="4.40 A"/>
    <property type="chains" value="f=1-98"/>
</dbReference>
<dbReference type="PDB" id="9BRY">
    <property type="method" value="EM"/>
    <property type="resolution" value="3.60 A"/>
    <property type="chains" value="f=1-98"/>
</dbReference>
<dbReference type="PDB" id="9BRZ">
    <property type="method" value="EM"/>
    <property type="resolution" value="3.80 A"/>
    <property type="chains" value="f=1-98"/>
</dbReference>
<dbReference type="PDBsum" id="9BRA"/>
<dbReference type="PDBsum" id="9BRQ"/>
<dbReference type="PDBsum" id="9BRR"/>
<dbReference type="PDBsum" id="9BRS"/>
<dbReference type="PDBsum" id="9BRT"/>
<dbReference type="PDBsum" id="9BRU"/>
<dbReference type="PDBsum" id="9BRY"/>
<dbReference type="PDBsum" id="9BRZ"/>
<dbReference type="EMDB" id="EMD-44839"/>
<dbReference type="EMDB" id="EMD-44840"/>
<dbReference type="EMDB" id="EMD-44841"/>
<dbReference type="EMDB" id="EMD-44842"/>
<dbReference type="EMDB" id="EMD-44843"/>
<dbReference type="EMDB" id="EMD-44844"/>
<dbReference type="EMDB" id="EMD-44845"/>
<dbReference type="EMDB" id="EMD-44846"/>
<dbReference type="SMR" id="Q8K3C0"/>
<dbReference type="FunCoup" id="Q8K3C0">
    <property type="interactions" value="666"/>
</dbReference>
<dbReference type="STRING" id="10090.ENSMUSP00000048271"/>
<dbReference type="PhosphoSitePlus" id="Q8K3C0"/>
<dbReference type="SwissPalm" id="Q8K3C0"/>
<dbReference type="PaxDb" id="10090-ENSMUSP00000048271"/>
<dbReference type="PeptideAtlas" id="Q8K3C0"/>
<dbReference type="ProteomicsDB" id="260991"/>
<dbReference type="DNASU" id="52898"/>
<dbReference type="Ensembl" id="ENSMUST00000040428.4">
    <property type="protein sequence ID" value="ENSMUSP00000048271.4"/>
    <property type="gene ID" value="ENSMUSG00000093989.2"/>
</dbReference>
<dbReference type="Ensembl" id="ENSMUST00000176268.2">
    <property type="protein sequence ID" value="ENSMUSP00000135088.2"/>
    <property type="gene ID" value="ENSMUSG00000040904.11"/>
</dbReference>
<dbReference type="GeneID" id="52898"/>
<dbReference type="KEGG" id="mmu:52898"/>
<dbReference type="UCSC" id="uc007jui.2">
    <property type="organism name" value="mouse"/>
</dbReference>
<dbReference type="AGR" id="MGI:106369"/>
<dbReference type="CTD" id="440400"/>
<dbReference type="MGI" id="MGI:106369">
    <property type="gene designation" value="Rnasek"/>
</dbReference>
<dbReference type="VEuPathDB" id="HostDB:ENSMUSG00000040904"/>
<dbReference type="VEuPathDB" id="HostDB:ENSMUSG00000093989"/>
<dbReference type="eggNOG" id="ENOG502S351">
    <property type="taxonomic scope" value="Eukaryota"/>
</dbReference>
<dbReference type="GeneTree" id="ENSGT00390000009664"/>
<dbReference type="HOGENOM" id="CLU_140554_1_0_1"/>
<dbReference type="InParanoid" id="Q8K3C0"/>
<dbReference type="OMA" id="SNNCFIA"/>
<dbReference type="OrthoDB" id="67317at2759"/>
<dbReference type="PhylomeDB" id="Q8K3C0"/>
<dbReference type="TreeFam" id="TF300182"/>
<dbReference type="BioGRID-ORCS" id="52898">
    <property type="hits" value="26 hits in 76 CRISPR screens"/>
</dbReference>
<dbReference type="ChiTaRS" id="Rnasek">
    <property type="organism name" value="mouse"/>
</dbReference>
<dbReference type="PRO" id="PR:Q8K3C0"/>
<dbReference type="Proteomes" id="UP000000589">
    <property type="component" value="Chromosome 11"/>
</dbReference>
<dbReference type="RNAct" id="Q8K3C0">
    <property type="molecule type" value="protein"/>
</dbReference>
<dbReference type="Bgee" id="ENSMUSG00000040904">
    <property type="expression patterns" value="Expressed in bone marrow and 65 other cell types or tissues"/>
</dbReference>
<dbReference type="ExpressionAtlas" id="Q8K3C0">
    <property type="expression patterns" value="baseline and differential"/>
</dbReference>
<dbReference type="GO" id="GO:0030665">
    <property type="term" value="C:clathrin-coated vesicle membrane"/>
    <property type="evidence" value="ECO:0007669"/>
    <property type="project" value="UniProtKB-SubCell"/>
</dbReference>
<dbReference type="GO" id="GO:0012505">
    <property type="term" value="C:endomembrane system"/>
    <property type="evidence" value="ECO:0007669"/>
    <property type="project" value="UniProtKB-SubCell"/>
</dbReference>
<dbReference type="GO" id="GO:0000220">
    <property type="term" value="C:vacuolar proton-transporting V-type ATPase, V0 domain"/>
    <property type="evidence" value="ECO:0000250"/>
    <property type="project" value="UniProtKB"/>
</dbReference>
<dbReference type="GO" id="GO:0004521">
    <property type="term" value="F:RNA endonuclease activity"/>
    <property type="evidence" value="ECO:0000250"/>
    <property type="project" value="UniProtKB"/>
</dbReference>
<dbReference type="GO" id="GO:0048388">
    <property type="term" value="P:endosomal lumen acidification"/>
    <property type="evidence" value="ECO:0000250"/>
    <property type="project" value="UniProtKB"/>
</dbReference>
<dbReference type="GO" id="GO:1902600">
    <property type="term" value="P:proton transmembrane transport"/>
    <property type="evidence" value="ECO:0000250"/>
    <property type="project" value="UniProtKB"/>
</dbReference>
<dbReference type="GO" id="GO:0006898">
    <property type="term" value="P:receptor-mediated endocytosis"/>
    <property type="evidence" value="ECO:0000250"/>
    <property type="project" value="UniProtKB"/>
</dbReference>
<dbReference type="GO" id="GO:0019065">
    <property type="term" value="P:receptor-mediated endocytosis of virus by host cell"/>
    <property type="evidence" value="ECO:0000250"/>
    <property type="project" value="UniProtKB"/>
</dbReference>
<dbReference type="InterPro" id="IPR056552">
    <property type="entry name" value="Ribonucl_Kappa"/>
</dbReference>
<dbReference type="InterPro" id="IPR026770">
    <property type="entry name" value="RNase_K"/>
</dbReference>
<dbReference type="PANTHER" id="PTHR31733">
    <property type="entry name" value="RIBONUCLEASE KAPPA"/>
    <property type="match status" value="1"/>
</dbReference>
<dbReference type="Pfam" id="PF23489">
    <property type="entry name" value="V-ATPase_su_f"/>
    <property type="match status" value="1"/>
</dbReference>
<reference key="1">
    <citation type="journal article" date="2005" name="Science">
        <title>The transcriptional landscape of the mammalian genome.</title>
        <authorList>
            <person name="Carninci P."/>
            <person name="Kasukawa T."/>
            <person name="Katayama S."/>
            <person name="Gough J."/>
            <person name="Frith M.C."/>
            <person name="Maeda N."/>
            <person name="Oyama R."/>
            <person name="Ravasi T."/>
            <person name="Lenhard B."/>
            <person name="Wells C."/>
            <person name="Kodzius R."/>
            <person name="Shimokawa K."/>
            <person name="Bajic V.B."/>
            <person name="Brenner S.E."/>
            <person name="Batalov S."/>
            <person name="Forrest A.R."/>
            <person name="Zavolan M."/>
            <person name="Davis M.J."/>
            <person name="Wilming L.G."/>
            <person name="Aidinis V."/>
            <person name="Allen J.E."/>
            <person name="Ambesi-Impiombato A."/>
            <person name="Apweiler R."/>
            <person name="Aturaliya R.N."/>
            <person name="Bailey T.L."/>
            <person name="Bansal M."/>
            <person name="Baxter L."/>
            <person name="Beisel K.W."/>
            <person name="Bersano T."/>
            <person name="Bono H."/>
            <person name="Chalk A.M."/>
            <person name="Chiu K.P."/>
            <person name="Choudhary V."/>
            <person name="Christoffels A."/>
            <person name="Clutterbuck D.R."/>
            <person name="Crowe M.L."/>
            <person name="Dalla E."/>
            <person name="Dalrymple B.P."/>
            <person name="de Bono B."/>
            <person name="Della Gatta G."/>
            <person name="di Bernardo D."/>
            <person name="Down T."/>
            <person name="Engstrom P."/>
            <person name="Fagiolini M."/>
            <person name="Faulkner G."/>
            <person name="Fletcher C.F."/>
            <person name="Fukushima T."/>
            <person name="Furuno M."/>
            <person name="Futaki S."/>
            <person name="Gariboldi M."/>
            <person name="Georgii-Hemming P."/>
            <person name="Gingeras T.R."/>
            <person name="Gojobori T."/>
            <person name="Green R.E."/>
            <person name="Gustincich S."/>
            <person name="Harbers M."/>
            <person name="Hayashi Y."/>
            <person name="Hensch T.K."/>
            <person name="Hirokawa N."/>
            <person name="Hill D."/>
            <person name="Huminiecki L."/>
            <person name="Iacono M."/>
            <person name="Ikeo K."/>
            <person name="Iwama A."/>
            <person name="Ishikawa T."/>
            <person name="Jakt M."/>
            <person name="Kanapin A."/>
            <person name="Katoh M."/>
            <person name="Kawasawa Y."/>
            <person name="Kelso J."/>
            <person name="Kitamura H."/>
            <person name="Kitano H."/>
            <person name="Kollias G."/>
            <person name="Krishnan S.P."/>
            <person name="Kruger A."/>
            <person name="Kummerfeld S.K."/>
            <person name="Kurochkin I.V."/>
            <person name="Lareau L.F."/>
            <person name="Lazarevic D."/>
            <person name="Lipovich L."/>
            <person name="Liu J."/>
            <person name="Liuni S."/>
            <person name="McWilliam S."/>
            <person name="Madan Babu M."/>
            <person name="Madera M."/>
            <person name="Marchionni L."/>
            <person name="Matsuda H."/>
            <person name="Matsuzawa S."/>
            <person name="Miki H."/>
            <person name="Mignone F."/>
            <person name="Miyake S."/>
            <person name="Morris K."/>
            <person name="Mottagui-Tabar S."/>
            <person name="Mulder N."/>
            <person name="Nakano N."/>
            <person name="Nakauchi H."/>
            <person name="Ng P."/>
            <person name="Nilsson R."/>
            <person name="Nishiguchi S."/>
            <person name="Nishikawa S."/>
            <person name="Nori F."/>
            <person name="Ohara O."/>
            <person name="Okazaki Y."/>
            <person name="Orlando V."/>
            <person name="Pang K.C."/>
            <person name="Pavan W.J."/>
            <person name="Pavesi G."/>
            <person name="Pesole G."/>
            <person name="Petrovsky N."/>
            <person name="Piazza S."/>
            <person name="Reed J."/>
            <person name="Reid J.F."/>
            <person name="Ring B.Z."/>
            <person name="Ringwald M."/>
            <person name="Rost B."/>
            <person name="Ruan Y."/>
            <person name="Salzberg S.L."/>
            <person name="Sandelin A."/>
            <person name="Schneider C."/>
            <person name="Schoenbach C."/>
            <person name="Sekiguchi K."/>
            <person name="Semple C.A."/>
            <person name="Seno S."/>
            <person name="Sessa L."/>
            <person name="Sheng Y."/>
            <person name="Shibata Y."/>
            <person name="Shimada H."/>
            <person name="Shimada K."/>
            <person name="Silva D."/>
            <person name="Sinclair B."/>
            <person name="Sperling S."/>
            <person name="Stupka E."/>
            <person name="Sugiura K."/>
            <person name="Sultana R."/>
            <person name="Takenaka Y."/>
            <person name="Taki K."/>
            <person name="Tammoja K."/>
            <person name="Tan S.L."/>
            <person name="Tang S."/>
            <person name="Taylor M.S."/>
            <person name="Tegner J."/>
            <person name="Teichmann S.A."/>
            <person name="Ueda H.R."/>
            <person name="van Nimwegen E."/>
            <person name="Verardo R."/>
            <person name="Wei C.L."/>
            <person name="Yagi K."/>
            <person name="Yamanishi H."/>
            <person name="Zabarovsky E."/>
            <person name="Zhu S."/>
            <person name="Zimmer A."/>
            <person name="Hide W."/>
            <person name="Bult C."/>
            <person name="Grimmond S.M."/>
            <person name="Teasdale R.D."/>
            <person name="Liu E.T."/>
            <person name="Brusic V."/>
            <person name="Quackenbush J."/>
            <person name="Wahlestedt C."/>
            <person name="Mattick J.S."/>
            <person name="Hume D.A."/>
            <person name="Kai C."/>
            <person name="Sasaki D."/>
            <person name="Tomaru Y."/>
            <person name="Fukuda S."/>
            <person name="Kanamori-Katayama M."/>
            <person name="Suzuki M."/>
            <person name="Aoki J."/>
            <person name="Arakawa T."/>
            <person name="Iida J."/>
            <person name="Imamura K."/>
            <person name="Itoh M."/>
            <person name="Kato T."/>
            <person name="Kawaji H."/>
            <person name="Kawagashira N."/>
            <person name="Kawashima T."/>
            <person name="Kojima M."/>
            <person name="Kondo S."/>
            <person name="Konno H."/>
            <person name="Nakano K."/>
            <person name="Ninomiya N."/>
            <person name="Nishio T."/>
            <person name="Okada M."/>
            <person name="Plessy C."/>
            <person name="Shibata K."/>
            <person name="Shiraki T."/>
            <person name="Suzuki S."/>
            <person name="Tagami M."/>
            <person name="Waki K."/>
            <person name="Watahiki A."/>
            <person name="Okamura-Oho Y."/>
            <person name="Suzuki H."/>
            <person name="Kawai J."/>
            <person name="Hayashizaki Y."/>
        </authorList>
    </citation>
    <scope>NUCLEOTIDE SEQUENCE [LARGE SCALE MRNA]</scope>
    <source>
        <strain>C57BL/6J</strain>
        <strain>NOD</strain>
        <tissue>Spleen</tissue>
        <tissue>Tongue</tissue>
    </source>
</reference>
<reference key="2">
    <citation type="journal article" date="2009" name="PLoS Biol.">
        <title>Lineage-specific biology revealed by a finished genome assembly of the mouse.</title>
        <authorList>
            <person name="Church D.M."/>
            <person name="Goodstadt L."/>
            <person name="Hillier L.W."/>
            <person name="Zody M.C."/>
            <person name="Goldstein S."/>
            <person name="She X."/>
            <person name="Bult C.J."/>
            <person name="Agarwala R."/>
            <person name="Cherry J.L."/>
            <person name="DiCuccio M."/>
            <person name="Hlavina W."/>
            <person name="Kapustin Y."/>
            <person name="Meric P."/>
            <person name="Maglott D."/>
            <person name="Birtle Z."/>
            <person name="Marques A.C."/>
            <person name="Graves T."/>
            <person name="Zhou S."/>
            <person name="Teague B."/>
            <person name="Potamousis K."/>
            <person name="Churas C."/>
            <person name="Place M."/>
            <person name="Herschleb J."/>
            <person name="Runnheim R."/>
            <person name="Forrest D."/>
            <person name="Amos-Landgraf J."/>
            <person name="Schwartz D.C."/>
            <person name="Cheng Z."/>
            <person name="Lindblad-Toh K."/>
            <person name="Eichler E.E."/>
            <person name="Ponting C.P."/>
        </authorList>
    </citation>
    <scope>NUCLEOTIDE SEQUENCE [LARGE SCALE GENOMIC DNA]</scope>
    <source>
        <strain>C57BL/6J</strain>
    </source>
</reference>
<reference key="3">
    <citation type="submission" date="2007-06" db="EMBL/GenBank/DDBJ databases">
        <authorList>
            <person name="Mural R.J."/>
            <person name="Adams M.D."/>
            <person name="Myers E.W."/>
            <person name="Smith H.O."/>
            <person name="Venter J.C."/>
        </authorList>
    </citation>
    <scope>NUCLEOTIDE SEQUENCE [LARGE SCALE GENOMIC DNA]</scope>
</reference>
<reference key="4">
    <citation type="journal article" date="2004" name="Genome Res.">
        <title>The status, quality, and expansion of the NIH full-length cDNA project: the Mammalian Gene Collection (MGC).</title>
        <authorList>
            <consortium name="The MGC Project Team"/>
        </authorList>
    </citation>
    <scope>NUCLEOTIDE SEQUENCE [LARGE SCALE MRNA]</scope>
    <source>
        <strain>Czech II</strain>
        <strain>FVB/N</strain>
        <tissue>Liver</tissue>
        <tissue>Mammary tumor</tissue>
    </source>
</reference>
<protein>
    <recommendedName>
        <fullName>Ribonuclease kappa</fullName>
        <shortName>RNase K</shortName>
        <shortName>RNase kappa</shortName>
        <ecNumber evidence="2">3.1.-.-</ecNumber>
    </recommendedName>
    <alternativeName>
        <fullName evidence="2">V-type proton ATPase subunit f</fullName>
        <shortName evidence="2">V-ATPase subunit f</shortName>
    </alternativeName>
</protein>
<sequence>MASLLCCGPKLAACGIVLSAWGVIMLIMLGIFFNVHSAVLIEDVPFTEKDFENGPQNIYNLYEQVSYNCFIAAGLYLLLGGFSFCQVRLNKRKEYMVR</sequence>
<proteinExistence type="evidence at protein level"/>
<comment type="function">
    <text evidence="2">Endoribonuclease which preferentially cleaves ApU and ApG phosphodiester bonds. Hydrolyzes UpU bonds at a lower rate (By similarity). Regulates the activity of vacuolar (H+)-ATPase (V-ATPase) which is responsible for acidifying and maintaining the pH of intracellular compartments (By similarity). Required at an early stage of receptor-mediated endocytosis (By similarity).</text>
</comment>
<comment type="subunit">
    <text evidence="2">Interacts with the proton translocation complex V0 of the V-ATPase (By similarity). Interacts with ATP6AP1 (By similarity).</text>
</comment>
<comment type="subcellular location">
    <subcellularLocation>
        <location evidence="2">Endomembrane system</location>
        <topology evidence="3">Multi-pass membrane protein</topology>
    </subcellularLocation>
    <subcellularLocation>
        <location evidence="1">Cytoplasmic vesicle</location>
        <location evidence="1">Clathrin-coated vesicle membrane</location>
        <topology evidence="3">Multi-pass membrane protein</topology>
    </subcellularLocation>
</comment>
<comment type="similarity">
    <text evidence="4">Belongs to the RNase K family.</text>
</comment>
<feature type="chain" id="PRO_0000344222" description="Ribonuclease kappa">
    <location>
        <begin position="1"/>
        <end position="98"/>
    </location>
</feature>
<feature type="transmembrane region" description="Helical" evidence="3">
    <location>
        <begin position="13"/>
        <end position="33"/>
    </location>
</feature>
<feature type="transmembrane region" description="Helical" evidence="3">
    <location>
        <begin position="65"/>
        <end position="85"/>
    </location>
</feature>
<feature type="sequence conflict" description="In Ref. 1; BAE42755." evidence="4" ref="1">
    <original>M</original>
    <variation>I</variation>
    <location>
        <position position="96"/>
    </location>
</feature>
<gene>
    <name type="primary">Rnasek</name>
    <name type="synonym">D11Bwg0434e</name>
</gene>
<keyword id="KW-0002">3D-structure</keyword>
<keyword id="KW-0968">Cytoplasmic vesicle</keyword>
<keyword id="KW-0254">Endocytosis</keyword>
<keyword id="KW-0255">Endonuclease</keyword>
<keyword id="KW-0375">Hydrogen ion transport</keyword>
<keyword id="KW-0378">Hydrolase</keyword>
<keyword id="KW-0406">Ion transport</keyword>
<keyword id="KW-0472">Membrane</keyword>
<keyword id="KW-0540">Nuclease</keyword>
<keyword id="KW-1185">Reference proteome</keyword>
<keyword id="KW-0812">Transmembrane</keyword>
<keyword id="KW-1133">Transmembrane helix</keyword>
<keyword id="KW-0813">Transport</keyword>
<accession>Q8K3C0</accession>
<accession>Q3TAB4</accession>
<evidence type="ECO:0000250" key="1">
    <source>
        <dbReference type="UniProtKB" id="Q3ZC23"/>
    </source>
</evidence>
<evidence type="ECO:0000250" key="2">
    <source>
        <dbReference type="UniProtKB" id="Q6P5S7"/>
    </source>
</evidence>
<evidence type="ECO:0000255" key="3"/>
<evidence type="ECO:0000305" key="4"/>